<comment type="function">
    <text evidence="6 7 9 11 12 13 14 15">DNA polymerase specifically involved in DNA repair. Plays an important role in translesion synthesis, where the normal high-fidelity DNA polymerases cannot proceed and DNA synthesis stalls. Depending on the context, it inserts the correct base, but causes frequent base transitions, transversions and frameshifts. Lacks 3'-5' proofreading exonuclease activity. Forms a Schiff base with 5'-deoxyribose phosphate at abasic sites, but does not have lyase activity.</text>
</comment>
<comment type="catalytic activity">
    <reaction evidence="7">
        <text>DNA(n) + a 2'-deoxyribonucleoside 5'-triphosphate = DNA(n+1) + diphosphate</text>
        <dbReference type="Rhea" id="RHEA:22508"/>
        <dbReference type="Rhea" id="RHEA-COMP:17339"/>
        <dbReference type="Rhea" id="RHEA-COMP:17340"/>
        <dbReference type="ChEBI" id="CHEBI:33019"/>
        <dbReference type="ChEBI" id="CHEBI:61560"/>
        <dbReference type="ChEBI" id="CHEBI:173112"/>
        <dbReference type="EC" id="2.7.7.7"/>
    </reaction>
</comment>
<comment type="cofactor">
    <cofactor evidence="7">
        <name>Mg(2+)</name>
        <dbReference type="ChEBI" id="CHEBI:18420"/>
    </cofactor>
    <cofactor evidence="7">
        <name>Mn(2+)</name>
        <dbReference type="ChEBI" id="CHEBI:29035"/>
    </cofactor>
    <text evidence="7">Divalent metal cations. Prefers Mg(2+), but can also use Mn(2+).</text>
</comment>
<comment type="biophysicochemical properties">
    <phDependence>
        <text evidence="7">Optimum pH is 6.5-7.5.</text>
    </phDependence>
    <temperatureDependence>
        <text evidence="7">Optimum temperature is 37 degrees Celsius.</text>
    </temperatureDependence>
</comment>
<comment type="subunit">
    <text evidence="2 8">Interacts with REV1 (By similarity). Interacts with PCNA (PubMed:11784855).</text>
</comment>
<comment type="subcellular location">
    <subcellularLocation>
        <location evidence="10 15">Nucleus</location>
    </subcellularLocation>
    <text evidence="10 15">Detected throughout the nucleus and at replication foci (PubMed:12414988). Recruited to DNA damage sites in response to ultraviolet irradiation: N6-methyladenosine (m6A)-containing mRNAs accumulate in the vicinity of DNA damage sites and their presence is required to recruit POLK (PubMed:28297716).</text>
</comment>
<comment type="alternative products">
    <event type="alternative splicing"/>
    <isoform>
        <id>Q9UBT6-1</id>
        <name>1</name>
        <sequence type="displayed"/>
    </isoform>
    <isoform>
        <id>Q9UBT6-2</id>
        <name>2</name>
        <sequence type="described" ref="VSP_012801 VSP_012802"/>
    </isoform>
    <isoform>
        <id>Q9UBT6-3</id>
        <name>3</name>
        <sequence type="described" ref="VSP_012803"/>
    </isoform>
    <isoform>
        <id>Q9UBT6-4</id>
        <name>4</name>
        <sequence type="described" ref="VSP_012804 VSP_012805 VSP_012806"/>
    </isoform>
    <isoform>
        <id>Q9UBT6-5</id>
        <name>5</name>
        <sequence type="described" ref="VSP_053406 VSP_053409"/>
    </isoform>
    <isoform>
        <id>Q9UBT6-6</id>
        <name>6</name>
        <sequence type="described" ref="VSP_053407 VSP_053408"/>
    </isoform>
    <isoform>
        <id>Q9UBT6-7</id>
        <name>7</name>
        <sequence type="described" ref="VSP_012804 VSP_053407 VSP_053408"/>
    </isoform>
    <isoform>
        <id>Q9UBT6-8</id>
        <name>8</name>
        <sequence type="described" ref="VSP_012804"/>
    </isoform>
</comment>
<comment type="tissue specificity">
    <text evidence="5 6">Detected at low levels in testis, spleen, prostate and ovary. Detected at very low levels in kidney, colon, brain, heart, liver, lung, placenta, pancreas and peripheral blood leukocytes.</text>
</comment>
<comment type="domain">
    <text>The catalytic core consists of fingers, palm and thumb subdomains, but the fingers and thumb subdomains are much smaller than in high-fidelity polymerases; residues from five sequence motifs of the Y-family cluster around an active site cleft that can accommodate DNA and nucleotide substrates with relaxed geometric constraints, with consequently higher rates of misincorporation and low processivity.</text>
</comment>
<comment type="miscellaneous">
    <molecule>Isoform 4</molecule>
    <text evidence="21">May be produced at very low levels due to a premature stop codon in the mRNA, leading to nonsense-mediated mRNA decay.</text>
</comment>
<comment type="similarity">
    <text evidence="21">Belongs to the DNA polymerase type-Y family.</text>
</comment>
<keyword id="KW-0002">3D-structure</keyword>
<keyword id="KW-0025">Alternative splicing</keyword>
<keyword id="KW-0227">DNA damage</keyword>
<keyword id="KW-0234">DNA repair</keyword>
<keyword id="KW-0235">DNA replication</keyword>
<keyword id="KW-0237">DNA synthesis</keyword>
<keyword id="KW-0238">DNA-binding</keyword>
<keyword id="KW-0239">DNA-directed DNA polymerase</keyword>
<keyword id="KW-0460">Magnesium</keyword>
<keyword id="KW-0479">Metal-binding</keyword>
<keyword id="KW-0515">Mutator protein</keyword>
<keyword id="KW-0548">Nucleotidyltransferase</keyword>
<keyword id="KW-0539">Nucleus</keyword>
<keyword id="KW-1267">Proteomics identification</keyword>
<keyword id="KW-1185">Reference proteome</keyword>
<keyword id="KW-0677">Repeat</keyword>
<keyword id="KW-0704">Schiff base</keyword>
<keyword id="KW-0808">Transferase</keyword>
<keyword id="KW-0862">Zinc</keyword>
<keyword id="KW-0863">Zinc-finger</keyword>
<name>POLK_HUMAN</name>
<organism>
    <name type="scientific">Homo sapiens</name>
    <name type="common">Human</name>
    <dbReference type="NCBI Taxonomy" id="9606"/>
    <lineage>
        <taxon>Eukaryota</taxon>
        <taxon>Metazoa</taxon>
        <taxon>Chordata</taxon>
        <taxon>Craniata</taxon>
        <taxon>Vertebrata</taxon>
        <taxon>Euteleostomi</taxon>
        <taxon>Mammalia</taxon>
        <taxon>Eutheria</taxon>
        <taxon>Euarchontoglires</taxon>
        <taxon>Primates</taxon>
        <taxon>Haplorrhini</taxon>
        <taxon>Catarrhini</taxon>
        <taxon>Hominidae</taxon>
        <taxon>Homo</taxon>
    </lineage>
</organism>
<accession>Q9UBT6</accession>
<accession>B2RBD2</accession>
<accession>Q5Q9G5</accession>
<accession>Q5Q9G6</accession>
<accession>Q5Q9G7</accession>
<accession>Q5Q9G8</accession>
<accession>Q86VJ8</accession>
<accession>Q8IZY0</accession>
<accession>Q8IZY1</accession>
<accession>Q8NB30</accession>
<accession>Q96L01</accession>
<accession>Q96Q86</accession>
<accession>Q96Q87</accession>
<accession>Q9UHC5</accession>
<feature type="chain" id="PRO_0000173990" description="DNA polymerase kappa">
    <location>
        <begin position="1"/>
        <end position="870"/>
    </location>
</feature>
<feature type="domain" description="UmuC">
    <location>
        <begin position="103"/>
        <end position="358"/>
    </location>
</feature>
<feature type="zinc finger region" description="UBZ4-type 1" evidence="3">
    <location>
        <begin position="621"/>
        <end position="651"/>
    </location>
</feature>
<feature type="zinc finger region" description="UBZ4-type 2" evidence="3">
    <location>
        <begin position="776"/>
        <end position="806"/>
    </location>
</feature>
<feature type="region of interest" description="Disordered" evidence="4">
    <location>
        <begin position="816"/>
        <end position="858"/>
    </location>
</feature>
<feature type="binding site" evidence="1">
    <location>
        <position position="107"/>
    </location>
    <ligand>
        <name>Mg(2+)</name>
        <dbReference type="ChEBI" id="CHEBI:18420"/>
    </ligand>
</feature>
<feature type="binding site" evidence="1">
    <location>
        <position position="198"/>
    </location>
    <ligand>
        <name>Mg(2+)</name>
        <dbReference type="ChEBI" id="CHEBI:18420"/>
    </ligand>
</feature>
<feature type="binding site" evidence="1">
    <location>
        <position position="199"/>
    </location>
    <ligand>
        <name>Mg(2+)</name>
        <dbReference type="ChEBI" id="CHEBI:18420"/>
    </ligand>
</feature>
<feature type="binding site" evidence="3">
    <location>
        <position position="624"/>
    </location>
    <ligand>
        <name>Zn(2+)</name>
        <dbReference type="ChEBI" id="CHEBI:29105"/>
        <label>1</label>
    </ligand>
</feature>
<feature type="binding site" evidence="3">
    <location>
        <position position="627"/>
    </location>
    <ligand>
        <name>Zn(2+)</name>
        <dbReference type="ChEBI" id="CHEBI:29105"/>
        <label>1</label>
    </ligand>
</feature>
<feature type="binding site" evidence="3">
    <location>
        <position position="642"/>
    </location>
    <ligand>
        <name>Zn(2+)</name>
        <dbReference type="ChEBI" id="CHEBI:29105"/>
        <label>1</label>
    </ligand>
</feature>
<feature type="binding site" evidence="3">
    <location>
        <position position="646"/>
    </location>
    <ligand>
        <name>Zn(2+)</name>
        <dbReference type="ChEBI" id="CHEBI:29105"/>
        <label>1</label>
    </ligand>
</feature>
<feature type="binding site" evidence="3">
    <location>
        <position position="779"/>
    </location>
    <ligand>
        <name>Zn(2+)</name>
        <dbReference type="ChEBI" id="CHEBI:29105"/>
        <label>2</label>
    </ligand>
</feature>
<feature type="binding site" evidence="3">
    <location>
        <position position="782"/>
    </location>
    <ligand>
        <name>Zn(2+)</name>
        <dbReference type="ChEBI" id="CHEBI:29105"/>
        <label>2</label>
    </ligand>
</feature>
<feature type="binding site" evidence="3">
    <location>
        <position position="797"/>
    </location>
    <ligand>
        <name>Zn(2+)</name>
        <dbReference type="ChEBI" id="CHEBI:29105"/>
        <label>2</label>
    </ligand>
</feature>
<feature type="binding site" evidence="3">
    <location>
        <position position="801"/>
    </location>
    <ligand>
        <name>Zn(2+)</name>
        <dbReference type="ChEBI" id="CHEBI:29105"/>
        <label>2</label>
    </ligand>
</feature>
<feature type="splice variant" id="VSP_012804" description="In isoform 4, isoform 7 and isoform 8." evidence="17 19">
    <location>
        <begin position="1"/>
        <end position="90"/>
    </location>
</feature>
<feature type="splice variant" id="VSP_012803" description="In isoform 3." evidence="20">
    <location>
        <begin position="312"/>
        <end position="509"/>
    </location>
</feature>
<feature type="splice variant" id="VSP_053406" description="In isoform 5." evidence="19">
    <original>GRTVTIKLKNVNFEVKTRASTVSSVVSTAEEIFAIAK</original>
    <variation>VFGYLVFPMKRTGNTNKGALLAFYRLETKPCQPLSVH</variation>
    <location>
        <begin position="453"/>
        <end position="489"/>
    </location>
</feature>
<feature type="splice variant" id="VSP_012801" description="In isoform 2." evidence="18">
    <original>GRTVTIKLKNVNFEVKTRAS</original>
    <variation>VLYFDMVSLVFKFFNSKMLP</variation>
    <location>
        <begin position="453"/>
        <end position="472"/>
    </location>
</feature>
<feature type="splice variant" id="VSP_012805" description="In isoform 4." evidence="17">
    <original>GRTVTIKLKN</original>
    <variation>KKYLPLLRNC</variation>
    <location>
        <begin position="453"/>
        <end position="462"/>
    </location>
</feature>
<feature type="splice variant" id="VSP_053407" description="In isoform 6 and isoform 7." evidence="19">
    <original>GRTVTIKLK</original>
    <variation>VAQVEYRRL</variation>
    <location>
        <begin position="453"/>
        <end position="461"/>
    </location>
</feature>
<feature type="splice variant" id="VSP_053408" description="In isoform 6 and isoform 7." evidence="19">
    <location>
        <begin position="462"/>
        <end position="870"/>
    </location>
</feature>
<feature type="splice variant" id="VSP_012806" description="In isoform 4." evidence="17">
    <location>
        <begin position="463"/>
        <end position="870"/>
    </location>
</feature>
<feature type="splice variant" id="VSP_012802" description="In isoform 2." evidence="18">
    <location>
        <begin position="473"/>
        <end position="870"/>
    </location>
</feature>
<feature type="splice variant" id="VSP_053409" description="In isoform 5." evidence="19">
    <location>
        <begin position="490"/>
        <end position="870"/>
    </location>
</feature>
<feature type="sequence variant" id="VAR_048886" description="In dbSNP:rs35257416.">
    <original>S</original>
    <variation>R</variation>
    <location>
        <position position="423"/>
    </location>
</feature>
<feature type="sequence variant" id="VAR_021246" description="In dbSNP:rs5744713." evidence="16">
    <original>T</original>
    <variation>I</variation>
    <location>
        <position position="595"/>
    </location>
</feature>
<feature type="sequence variant" id="VAR_021247" description="In dbSNP:rs3822587.">
    <original>I</original>
    <variation>V</variation>
    <location>
        <position position="612"/>
    </location>
</feature>
<feature type="sequence variant" id="VAR_048887" description="In dbSNP:rs35501530.">
    <original>S</original>
    <variation>N</variation>
    <location>
        <position position="635"/>
    </location>
</feature>
<feature type="sequence variant" id="VAR_021248" description="In dbSNP:rs5744716." evidence="16">
    <original>S</original>
    <variation>N</variation>
    <location>
        <position position="832"/>
    </location>
</feature>
<feature type="mutagenesis site" description="Loss of DNA polymerase activity; when associated with A-199." evidence="7">
    <original>D</original>
    <variation>A</variation>
    <location>
        <position position="198"/>
    </location>
</feature>
<feature type="mutagenesis site" description="Loss of DNA polymerase activity; when associated with D-198." evidence="7">
    <original>E</original>
    <variation>A</variation>
    <location>
        <position position="199"/>
    </location>
</feature>
<feature type="sequence conflict" description="In Ref. 11; BAB58975." evidence="21" ref="11">
    <original>L</original>
    <variation>F</variation>
    <location>
        <position position="21"/>
    </location>
</feature>
<feature type="sequence conflict" description="In Ref. 11; BAB58975." evidence="21" ref="11">
    <original>I</original>
    <variation>T</variation>
    <location>
        <position position="39"/>
    </location>
</feature>
<feature type="sequence conflict" description="In Ref. 11; BAB58976." evidence="21" ref="11">
    <original>R</original>
    <variation>L</variation>
    <location>
        <position position="219"/>
    </location>
</feature>
<feature type="sequence conflict" description="In Ref. 6; BAC03714." evidence="21" ref="6">
    <original>V</original>
    <variation>G</variation>
    <location>
        <position position="342"/>
    </location>
</feature>
<feature type="sequence conflict" description="In Ref. 4; AAF23270." evidence="21" ref="4">
    <original>K</original>
    <variation>N</variation>
    <location>
        <position position="557"/>
    </location>
</feature>
<feature type="sequence conflict" description="In Ref. 4; AAF23270." evidence="21" ref="4">
    <original>M</original>
    <variation>V</variation>
    <location>
        <position position="847"/>
    </location>
</feature>
<feature type="turn" evidence="25">
    <location>
        <begin position="17"/>
        <end position="19"/>
    </location>
</feature>
<feature type="helix" evidence="25">
    <location>
        <begin position="33"/>
        <end position="44"/>
    </location>
</feature>
<feature type="helix" evidence="25">
    <location>
        <begin position="48"/>
        <end position="73"/>
    </location>
</feature>
<feature type="helix" evidence="25">
    <location>
        <begin position="76"/>
        <end position="95"/>
    </location>
</feature>
<feature type="strand" evidence="25">
    <location>
        <begin position="103"/>
        <end position="108"/>
    </location>
</feature>
<feature type="helix" evidence="25">
    <location>
        <begin position="111"/>
        <end position="119"/>
    </location>
</feature>
<feature type="helix" evidence="25">
    <location>
        <begin position="121"/>
        <end position="123"/>
    </location>
</feature>
<feature type="strand" evidence="24">
    <location>
        <begin position="124"/>
        <end position="126"/>
    </location>
</feature>
<feature type="strand" evidence="25">
    <location>
        <begin position="128"/>
        <end position="131"/>
    </location>
</feature>
<feature type="strand" evidence="25">
    <location>
        <begin position="136"/>
        <end position="139"/>
    </location>
</feature>
<feature type="helix" evidence="25">
    <location>
        <begin position="141"/>
        <end position="144"/>
    </location>
</feature>
<feature type="turn" evidence="25">
    <location>
        <begin position="145"/>
        <end position="147"/>
    </location>
</feature>
<feature type="helix" evidence="25">
    <location>
        <begin position="154"/>
        <end position="160"/>
    </location>
</feature>
<feature type="strand" evidence="25">
    <location>
        <begin position="165"/>
        <end position="167"/>
    </location>
</feature>
<feature type="helix" evidence="25">
    <location>
        <begin position="171"/>
        <end position="186"/>
    </location>
</feature>
<feature type="strand" evidence="25">
    <location>
        <begin position="196"/>
        <end position="203"/>
    </location>
</feature>
<feature type="helix" evidence="25">
    <location>
        <begin position="205"/>
        <end position="211"/>
    </location>
</feature>
<feature type="helix" evidence="25">
    <location>
        <begin position="216"/>
        <end position="219"/>
    </location>
</feature>
<feature type="strand" evidence="25">
    <location>
        <begin position="220"/>
        <end position="222"/>
    </location>
</feature>
<feature type="helix" evidence="22">
    <location>
        <begin position="236"/>
        <end position="241"/>
    </location>
</feature>
<feature type="turn" evidence="22">
    <location>
        <begin position="243"/>
        <end position="248"/>
    </location>
</feature>
<feature type="helix" evidence="22">
    <location>
        <begin position="249"/>
        <end position="251"/>
    </location>
</feature>
<feature type="strand" evidence="25">
    <location>
        <begin position="283"/>
        <end position="285"/>
    </location>
</feature>
<feature type="helix" evidence="25">
    <location>
        <begin position="290"/>
        <end position="305"/>
    </location>
</feature>
<feature type="strand" evidence="25">
    <location>
        <begin position="309"/>
        <end position="316"/>
    </location>
</feature>
<feature type="helix" evidence="25">
    <location>
        <begin position="317"/>
        <end position="326"/>
    </location>
</feature>
<feature type="turn" evidence="22">
    <location>
        <begin position="327"/>
        <end position="330"/>
    </location>
</feature>
<feature type="strand" evidence="25">
    <location>
        <begin position="332"/>
        <end position="334"/>
    </location>
</feature>
<feature type="helix" evidence="25">
    <location>
        <begin position="339"/>
        <end position="346"/>
    </location>
</feature>
<feature type="helix" evidence="25">
    <location>
        <begin position="351"/>
        <end position="353"/>
    </location>
</feature>
<feature type="helix" evidence="25">
    <location>
        <begin position="359"/>
        <end position="367"/>
    </location>
</feature>
<feature type="helix" evidence="25">
    <location>
        <begin position="373"/>
        <end position="378"/>
    </location>
</feature>
<feature type="helix" evidence="25">
    <location>
        <begin position="380"/>
        <end position="386"/>
    </location>
</feature>
<feature type="helix" evidence="25">
    <location>
        <begin position="389"/>
        <end position="399"/>
    </location>
</feature>
<feature type="strand" evidence="25">
    <location>
        <begin position="415"/>
        <end position="425"/>
    </location>
</feature>
<feature type="helix" evidence="25">
    <location>
        <begin position="428"/>
        <end position="448"/>
    </location>
</feature>
<feature type="strand" evidence="25">
    <location>
        <begin position="453"/>
        <end position="462"/>
    </location>
</feature>
<feature type="strand" evidence="25">
    <location>
        <begin position="467"/>
        <end position="478"/>
    </location>
</feature>
<feature type="helix" evidence="25">
    <location>
        <begin position="481"/>
        <end position="499"/>
    </location>
</feature>
<feature type="strand" evidence="25">
    <location>
        <begin position="506"/>
        <end position="514"/>
    </location>
</feature>
<feature type="strand" evidence="26">
    <location>
        <begin position="519"/>
        <end position="524"/>
    </location>
</feature>
<feature type="turn" evidence="26">
    <location>
        <begin position="530"/>
        <end position="532"/>
    </location>
</feature>
<feature type="helix" evidence="23">
    <location>
        <begin position="567"/>
        <end position="574"/>
    </location>
</feature>
<evidence type="ECO:0000250" key="1"/>
<evidence type="ECO:0000250" key="2">
    <source>
        <dbReference type="UniProtKB" id="Q9QUG2"/>
    </source>
</evidence>
<evidence type="ECO:0000255" key="3">
    <source>
        <dbReference type="PROSITE-ProRule" id="PRU01256"/>
    </source>
</evidence>
<evidence type="ECO:0000256" key="4">
    <source>
        <dbReference type="SAM" id="MobiDB-lite"/>
    </source>
</evidence>
<evidence type="ECO:0000269" key="5">
    <source>
    </source>
</evidence>
<evidence type="ECO:0000269" key="6">
    <source>
    </source>
</evidence>
<evidence type="ECO:0000269" key="7">
    <source>
    </source>
</evidence>
<evidence type="ECO:0000269" key="8">
    <source>
    </source>
</evidence>
<evidence type="ECO:0000269" key="9">
    <source>
    </source>
</evidence>
<evidence type="ECO:0000269" key="10">
    <source>
    </source>
</evidence>
<evidence type="ECO:0000269" key="11">
    <source>
    </source>
</evidence>
<evidence type="ECO:0000269" key="12">
    <source>
    </source>
</evidence>
<evidence type="ECO:0000269" key="13">
    <source>
    </source>
</evidence>
<evidence type="ECO:0000269" key="14">
    <source>
    </source>
</evidence>
<evidence type="ECO:0000269" key="15">
    <source>
    </source>
</evidence>
<evidence type="ECO:0000269" key="16">
    <source ref="7"/>
</evidence>
<evidence type="ECO:0000303" key="17">
    <source>
    </source>
</evidence>
<evidence type="ECO:0000303" key="18">
    <source>
    </source>
</evidence>
<evidence type="ECO:0000303" key="19">
    <source>
    </source>
</evidence>
<evidence type="ECO:0000303" key="20">
    <source ref="5"/>
</evidence>
<evidence type="ECO:0000305" key="21"/>
<evidence type="ECO:0007829" key="22">
    <source>
        <dbReference type="PDB" id="1T94"/>
    </source>
</evidence>
<evidence type="ECO:0007829" key="23">
    <source>
        <dbReference type="PDB" id="4BA9"/>
    </source>
</evidence>
<evidence type="ECO:0007829" key="24">
    <source>
        <dbReference type="PDB" id="5W2A"/>
    </source>
</evidence>
<evidence type="ECO:0007829" key="25">
    <source>
        <dbReference type="PDB" id="6CST"/>
    </source>
</evidence>
<evidence type="ECO:0007829" key="26">
    <source>
        <dbReference type="PDB" id="7NV0"/>
    </source>
</evidence>
<gene>
    <name type="primary">POLK</name>
    <name type="synonym">DINB1</name>
</gene>
<sequence length="870" mass="98809">MDSTKEKCDSYKDDLLLRMGLNDNKAGMEGLDKEKINKIIMEATKGSRFYGNELKKEKQVNQRIENMMQQKAQITSQQLRKAQLQVDRFAMELEQSRNLSNTIVHIDMDAFYAAVEMRDNPELKDKPIAVGSMSMLSTSNYHARRFGVRAAMPGFIAKRLCPQLIIVPPNFDKYRAVSKEVKEILADYDPNFMAMSLDEAYLNITKHLEERQNWPEDKRRYFIKMGSSVENDNPGKEVNKLSEHERSISPLLFEESPSDVQPPGDPFQVNFEEQNNPQILQNSVVFGTSAQEVVKEIRFRIEQKTTLTASAGIAPNTMLAKVCSDKNKPNGQYQILPNRQAVMDFIKDLPIRKVSGIGKVTEKMLKALGIITCTELYQQRALLSLLFSETSWHYFLHISLGLGSTHLTRDGERKSMSVERTFSEINKAEEQYSLCQELCSELAQDLQKERLKGRTVTIKLKNVNFEVKTRASTVSSVVSTAEEIFAIAKELLKTEIDADFPHPLRLRLMGVRISSFPNEEDRKHQQRSIIGFLQAGNQALSATECTLEKTDKDKFVKPLEMSHKKSFFDKKRSERKWSHQDTFKCEAVNKQSFQTSQPFQVLKKKMNENLEISENSDDCQILTCPVCFRAQGCISLEALNKHVDECLDGPSISENFKMFSCSHVSATKVNKKENVPASSLCEKQDYEAHPKIKEISSVDCIALVDTIDNSSKAESIDALSNKHSKEECSSLPSKSFNIEHCHQNSSSTVSLENEDVGSFRQEYRQPYLCEVKTGQALVCPVCNVEQKTSDLTLFNVHVDVCLNKSFIQELRKDKFNPVNQPKESSRSTGSSSGVQKAVTRTKRPGLMTKYSTSKKIKPNNPKHTLDIFFK</sequence>
<reference key="1">
    <citation type="journal article" date="1999" name="Genes Cells">
        <title>Mutation enhancement by DINB1, a mammalian homologue of the Escherichia coli mutagenesis protein dinB.</title>
        <authorList>
            <person name="Ogi T."/>
            <person name="Kato T. Jr."/>
            <person name="Kato R."/>
            <person name="Ohmori H."/>
        </authorList>
    </citation>
    <scope>NUCLEOTIDE SEQUENCE [MRNA] (ISOFORM 1)</scope>
    <scope>FUNCTION</scope>
    <scope>TISSUE SPECIFICITY</scope>
    <source>
        <tissue>Testis</tissue>
    </source>
</reference>
<reference key="2">
    <citation type="journal article" date="1999" name="Proc. Natl. Acad. Sci. U.S.A.">
        <title>Human and mouse homologs of Escherichia coli DinB (DNA polymerase IV), members of the UmuC/DinB superfamily.</title>
        <authorList>
            <person name="Gerlach V.L."/>
            <person name="Aravind L."/>
            <person name="Gotway G."/>
            <person name="Schultz R.A."/>
            <person name="Koonin E.V."/>
            <person name="Friedberg E.C."/>
        </authorList>
    </citation>
    <scope>NUCLEOTIDE SEQUENCE [MRNA] (ISOFORM 1)</scope>
    <scope>ALTERNATIVE SPLICING</scope>
    <scope>TISSUE SPECIFICITY</scope>
    <source>
        <tissue>Cervix carcinoma</tissue>
    </source>
</reference>
<reference key="3">
    <citation type="journal article" date="2005" name="DNA Repair">
        <title>Multiple PolK (POLK) transcripts in mammalian testis.</title>
        <authorList>
            <person name="Guo C."/>
            <person name="Gao T."/>
            <person name="Confer N."/>
            <person name="Velasco-Miguel S."/>
            <person name="Friedberg E.C."/>
        </authorList>
    </citation>
    <scope>NUCLEOTIDE SEQUENCE [MRNA] (ISOFORMS 5; 6; 7 AND 8)</scope>
    <scope>ALTERNATIVE SPLICING</scope>
    <source>
        <tissue>Testis</tissue>
    </source>
</reference>
<reference key="4">
    <citation type="submission" date="1999-10" db="EMBL/GenBank/DDBJ databases">
        <title>Homo sapiens DINP protein mRNA, complete cds.</title>
        <authorList>
            <person name="Poltoratsky V.P."/>
            <person name="Scharff M.D."/>
        </authorList>
    </citation>
    <scope>NUCLEOTIDE SEQUENCE [MRNA] (ISOFORM 1)</scope>
</reference>
<reference key="5">
    <citation type="submission" date="2000-11" db="EMBL/GenBank/DDBJ databases">
        <title>A bidirectional promoter for the genes encoding DNA polymerase kappa and Goodpasture autoantigen binding protein: identification of a novel pol kappa alternative spliced variant.</title>
        <authorList>
            <person name="Revert-Ros F."/>
            <person name="Saus J."/>
        </authorList>
    </citation>
    <scope>NUCLEOTIDE SEQUENCE [MRNA] (ISOFORM 3)</scope>
</reference>
<reference key="6">
    <citation type="journal article" date="2004" name="Nat. Genet.">
        <title>Complete sequencing and characterization of 21,243 full-length human cDNAs.</title>
        <authorList>
            <person name="Ota T."/>
            <person name="Suzuki Y."/>
            <person name="Nishikawa T."/>
            <person name="Otsuki T."/>
            <person name="Sugiyama T."/>
            <person name="Irie R."/>
            <person name="Wakamatsu A."/>
            <person name="Hayashi K."/>
            <person name="Sato H."/>
            <person name="Nagai K."/>
            <person name="Kimura K."/>
            <person name="Makita H."/>
            <person name="Sekine M."/>
            <person name="Obayashi M."/>
            <person name="Nishi T."/>
            <person name="Shibahara T."/>
            <person name="Tanaka T."/>
            <person name="Ishii S."/>
            <person name="Yamamoto J."/>
            <person name="Saito K."/>
            <person name="Kawai Y."/>
            <person name="Isono Y."/>
            <person name="Nakamura Y."/>
            <person name="Nagahari K."/>
            <person name="Murakami K."/>
            <person name="Yasuda T."/>
            <person name="Iwayanagi T."/>
            <person name="Wagatsuma M."/>
            <person name="Shiratori A."/>
            <person name="Sudo H."/>
            <person name="Hosoiri T."/>
            <person name="Kaku Y."/>
            <person name="Kodaira H."/>
            <person name="Kondo H."/>
            <person name="Sugawara M."/>
            <person name="Takahashi M."/>
            <person name="Kanda K."/>
            <person name="Yokoi T."/>
            <person name="Furuya T."/>
            <person name="Kikkawa E."/>
            <person name="Omura Y."/>
            <person name="Abe K."/>
            <person name="Kamihara K."/>
            <person name="Katsuta N."/>
            <person name="Sato K."/>
            <person name="Tanikawa M."/>
            <person name="Yamazaki M."/>
            <person name="Ninomiya K."/>
            <person name="Ishibashi T."/>
            <person name="Yamashita H."/>
            <person name="Murakawa K."/>
            <person name="Fujimori K."/>
            <person name="Tanai H."/>
            <person name="Kimata M."/>
            <person name="Watanabe M."/>
            <person name="Hiraoka S."/>
            <person name="Chiba Y."/>
            <person name="Ishida S."/>
            <person name="Ono Y."/>
            <person name="Takiguchi S."/>
            <person name="Watanabe S."/>
            <person name="Yosida M."/>
            <person name="Hotuta T."/>
            <person name="Kusano J."/>
            <person name="Kanehori K."/>
            <person name="Takahashi-Fujii A."/>
            <person name="Hara H."/>
            <person name="Tanase T.-O."/>
            <person name="Nomura Y."/>
            <person name="Togiya S."/>
            <person name="Komai F."/>
            <person name="Hara R."/>
            <person name="Takeuchi K."/>
            <person name="Arita M."/>
            <person name="Imose N."/>
            <person name="Musashino K."/>
            <person name="Yuuki H."/>
            <person name="Oshima A."/>
            <person name="Sasaki N."/>
            <person name="Aotsuka S."/>
            <person name="Yoshikawa Y."/>
            <person name="Matsunawa H."/>
            <person name="Ichihara T."/>
            <person name="Shiohata N."/>
            <person name="Sano S."/>
            <person name="Moriya S."/>
            <person name="Momiyama H."/>
            <person name="Satoh N."/>
            <person name="Takami S."/>
            <person name="Terashima Y."/>
            <person name="Suzuki O."/>
            <person name="Nakagawa S."/>
            <person name="Senoh A."/>
            <person name="Mizoguchi H."/>
            <person name="Goto Y."/>
            <person name="Shimizu F."/>
            <person name="Wakebe H."/>
            <person name="Hishigaki H."/>
            <person name="Watanabe T."/>
            <person name="Sugiyama A."/>
            <person name="Takemoto M."/>
            <person name="Kawakami B."/>
            <person name="Yamazaki M."/>
            <person name="Watanabe K."/>
            <person name="Kumagai A."/>
            <person name="Itakura S."/>
            <person name="Fukuzumi Y."/>
            <person name="Fujimori Y."/>
            <person name="Komiyama M."/>
            <person name="Tashiro H."/>
            <person name="Tanigami A."/>
            <person name="Fujiwara T."/>
            <person name="Ono T."/>
            <person name="Yamada K."/>
            <person name="Fujii Y."/>
            <person name="Ozaki K."/>
            <person name="Hirao M."/>
            <person name="Ohmori Y."/>
            <person name="Kawabata A."/>
            <person name="Hikiji T."/>
            <person name="Kobatake N."/>
            <person name="Inagaki H."/>
            <person name="Ikema Y."/>
            <person name="Okamoto S."/>
            <person name="Okitani R."/>
            <person name="Kawakami T."/>
            <person name="Noguchi S."/>
            <person name="Itoh T."/>
            <person name="Shigeta K."/>
            <person name="Senba T."/>
            <person name="Matsumura K."/>
            <person name="Nakajima Y."/>
            <person name="Mizuno T."/>
            <person name="Morinaga M."/>
            <person name="Sasaki M."/>
            <person name="Togashi T."/>
            <person name="Oyama M."/>
            <person name="Hata H."/>
            <person name="Watanabe M."/>
            <person name="Komatsu T."/>
            <person name="Mizushima-Sugano J."/>
            <person name="Satoh T."/>
            <person name="Shirai Y."/>
            <person name="Takahashi Y."/>
            <person name="Nakagawa K."/>
            <person name="Okumura K."/>
            <person name="Nagase T."/>
            <person name="Nomura N."/>
            <person name="Kikuchi H."/>
            <person name="Masuho Y."/>
            <person name="Yamashita R."/>
            <person name="Nakai K."/>
            <person name="Yada T."/>
            <person name="Nakamura Y."/>
            <person name="Ohara O."/>
            <person name="Isogai T."/>
            <person name="Sugano S."/>
        </authorList>
    </citation>
    <scope>NUCLEOTIDE SEQUENCE [LARGE SCALE MRNA] (ISOFORMS 1 AND 4)</scope>
    <source>
        <tissue>Brain</tissue>
        <tissue>Trachea</tissue>
    </source>
</reference>
<reference key="7">
    <citation type="submission" date="2003-04" db="EMBL/GenBank/DDBJ databases">
        <authorList>
            <consortium name="NIEHS SNPs program"/>
        </authorList>
    </citation>
    <scope>NUCLEOTIDE SEQUENCE [GENOMIC DNA]</scope>
    <scope>VARIANTS ILE-595 AND ASN-832</scope>
</reference>
<reference key="8">
    <citation type="journal article" date="2004" name="Nature">
        <title>The DNA sequence and comparative analysis of human chromosome 5.</title>
        <authorList>
            <person name="Schmutz J."/>
            <person name="Martin J."/>
            <person name="Terry A."/>
            <person name="Couronne O."/>
            <person name="Grimwood J."/>
            <person name="Lowry S."/>
            <person name="Gordon L.A."/>
            <person name="Scott D."/>
            <person name="Xie G."/>
            <person name="Huang W."/>
            <person name="Hellsten U."/>
            <person name="Tran-Gyamfi M."/>
            <person name="She X."/>
            <person name="Prabhakar S."/>
            <person name="Aerts A."/>
            <person name="Altherr M."/>
            <person name="Bajorek E."/>
            <person name="Black S."/>
            <person name="Branscomb E."/>
            <person name="Caoile C."/>
            <person name="Challacombe J.F."/>
            <person name="Chan Y.M."/>
            <person name="Denys M."/>
            <person name="Detter J.C."/>
            <person name="Escobar J."/>
            <person name="Flowers D."/>
            <person name="Fotopulos D."/>
            <person name="Glavina T."/>
            <person name="Gomez M."/>
            <person name="Gonzales E."/>
            <person name="Goodstein D."/>
            <person name="Grigoriev I."/>
            <person name="Groza M."/>
            <person name="Hammon N."/>
            <person name="Hawkins T."/>
            <person name="Haydu L."/>
            <person name="Israni S."/>
            <person name="Jett J."/>
            <person name="Kadner K."/>
            <person name="Kimball H."/>
            <person name="Kobayashi A."/>
            <person name="Lopez F."/>
            <person name="Lou Y."/>
            <person name="Martinez D."/>
            <person name="Medina C."/>
            <person name="Morgan J."/>
            <person name="Nandkeshwar R."/>
            <person name="Noonan J.P."/>
            <person name="Pitluck S."/>
            <person name="Pollard M."/>
            <person name="Predki P."/>
            <person name="Priest J."/>
            <person name="Ramirez L."/>
            <person name="Retterer J."/>
            <person name="Rodriguez A."/>
            <person name="Rogers S."/>
            <person name="Salamov A."/>
            <person name="Salazar A."/>
            <person name="Thayer N."/>
            <person name="Tice H."/>
            <person name="Tsai M."/>
            <person name="Ustaszewska A."/>
            <person name="Vo N."/>
            <person name="Wheeler J."/>
            <person name="Wu K."/>
            <person name="Yang J."/>
            <person name="Dickson M."/>
            <person name="Cheng J.-F."/>
            <person name="Eichler E.E."/>
            <person name="Olsen A."/>
            <person name="Pennacchio L.A."/>
            <person name="Rokhsar D.S."/>
            <person name="Richardson P."/>
            <person name="Lucas S.M."/>
            <person name="Myers R.M."/>
            <person name="Rubin E.M."/>
        </authorList>
    </citation>
    <scope>NUCLEOTIDE SEQUENCE [LARGE SCALE GENOMIC DNA]</scope>
</reference>
<reference key="9">
    <citation type="submission" date="2005-07" db="EMBL/GenBank/DDBJ databases">
        <authorList>
            <person name="Mural R.J."/>
            <person name="Istrail S."/>
            <person name="Sutton G.G."/>
            <person name="Florea L."/>
            <person name="Halpern A.L."/>
            <person name="Mobarry C.M."/>
            <person name="Lippert R."/>
            <person name="Walenz B."/>
            <person name="Shatkay H."/>
            <person name="Dew I."/>
            <person name="Miller J.R."/>
            <person name="Flanigan M.J."/>
            <person name="Edwards N.J."/>
            <person name="Bolanos R."/>
            <person name="Fasulo D."/>
            <person name="Halldorsson B.V."/>
            <person name="Hannenhalli S."/>
            <person name="Turner R."/>
            <person name="Yooseph S."/>
            <person name="Lu F."/>
            <person name="Nusskern D.R."/>
            <person name="Shue B.C."/>
            <person name="Zheng X.H."/>
            <person name="Zhong F."/>
            <person name="Delcher A.L."/>
            <person name="Huson D.H."/>
            <person name="Kravitz S.A."/>
            <person name="Mouchard L."/>
            <person name="Reinert K."/>
            <person name="Remington K.A."/>
            <person name="Clark A.G."/>
            <person name="Waterman M.S."/>
            <person name="Eichler E.E."/>
            <person name="Adams M.D."/>
            <person name="Hunkapiller M.W."/>
            <person name="Myers E.W."/>
            <person name="Venter J.C."/>
        </authorList>
    </citation>
    <scope>NUCLEOTIDE SEQUENCE [LARGE SCALE GENOMIC DNA]</scope>
</reference>
<reference key="10">
    <citation type="journal article" date="2004" name="Genome Res.">
        <title>The status, quality, and expansion of the NIH full-length cDNA project: the Mammalian Gene Collection (MGC).</title>
        <authorList>
            <consortium name="The MGC Project Team"/>
        </authorList>
    </citation>
    <scope>NUCLEOTIDE SEQUENCE [LARGE SCALE MRNA] OF 1-313 (ISOFORMS 1 AND 2)</scope>
    <source>
        <tissue>Lymph</tissue>
        <tissue>Spleen</tissue>
    </source>
</reference>
<reference key="11">
    <citation type="submission" date="2000-01" db="EMBL/GenBank/DDBJ databases">
        <title>Homo sapiens genomic sequence, containing DINB1 gene.</title>
        <authorList>
            <person name="Ogi T."/>
            <person name="Yamamoto Y."/>
            <person name="Ohmori H."/>
        </authorList>
    </citation>
    <scope>NUCLEOTIDE SEQUENCE [GENOMIC DNA] OF 1-231</scope>
</reference>
<reference key="12">
    <citation type="journal article" date="2001" name="J. Biol. Chem.">
        <title>Purification and characterization of pol kappa, a DNA polymerase encoded by the human DINB1 gene.</title>
        <authorList>
            <person name="Gerlach V.L."/>
            <person name="Feaver W.J."/>
            <person name="Fischhaber P.L."/>
            <person name="Friedberg E.C."/>
        </authorList>
    </citation>
    <scope>FUNCTION</scope>
    <scope>CATALYTIC ACTIVITY</scope>
    <scope>BIOPHYSICOCHEMICAL PROPERTIES</scope>
    <scope>COFACTOR</scope>
    <scope>MUTAGENESIS OF ASP-198 AND GLU-199</scope>
</reference>
<reference key="13">
    <citation type="journal article" date="2002" name="J. Biol. Chem.">
        <title>Human DNA polymerase kappa bypasses and extends beyond thymine glycols during translesion synthesis in vitro, preferentially incorporating correct nucleotides.</title>
        <authorList>
            <person name="Fischhaber P.L."/>
            <person name="Gerlach V.L."/>
            <person name="Feaver W.J."/>
            <person name="Hatahet Z."/>
            <person name="Wallace S.S."/>
            <person name="Friedberg E.C."/>
        </authorList>
    </citation>
    <scope>FUNCTION</scope>
</reference>
<reference key="14">
    <citation type="journal article" date="2002" name="J. Cell Sci.">
        <title>Localisation of human DNA polymerase kappa to replication foci.</title>
        <authorList>
            <person name="Bergoglio V."/>
            <person name="Bavoux C."/>
            <person name="Verbiest V."/>
            <person name="Hoffmann J.-S."/>
            <person name="Cazaux C."/>
        </authorList>
    </citation>
    <scope>SUBCELLULAR LOCATION</scope>
</reference>
<reference key="15">
    <citation type="journal article" date="2002" name="Mol. Cell. Biol.">
        <title>Stimulation of DNA synthesis activity of human DNA polymerase kappa by PCNA.</title>
        <authorList>
            <person name="Haracska L."/>
            <person name="Unk I."/>
            <person name="Johnson R.E."/>
            <person name="Phillips B.B."/>
            <person name="Hurwitz J."/>
            <person name="Prakash L."/>
            <person name="Prakash S."/>
        </authorList>
    </citation>
    <scope>INTERACTION WITH PCNA</scope>
</reference>
<reference key="16">
    <citation type="journal article" date="2002" name="Proc. Natl. Acad. Sci. U.S.A.">
        <title>Role of human DNA polymerase kappa as an extender in translesion synthesis.</title>
        <authorList>
            <person name="Haracska L."/>
            <person name="Prakash L."/>
            <person name="Prakash S."/>
        </authorList>
    </citation>
    <scope>FUNCTION</scope>
</reference>
<reference key="17">
    <citation type="journal article" date="2003" name="Genes Dev.">
        <title>Human DNA polymerase kappa uses template-primer misalignment as a novel means for extending mispaired termini and for generating single-base deletions.</title>
        <authorList>
            <person name="Wolfle W.T."/>
            <person name="Washington M.T."/>
            <person name="Prakash L."/>
            <person name="Prakash S."/>
        </authorList>
    </citation>
    <scope>FUNCTION</scope>
</reference>
<reference key="18">
    <citation type="journal article" date="2003" name="Genes Dev.">
        <title>A mechanism for the exclusion of low-fidelity human Y-family DNA polymerases from base excision repair.</title>
        <authorList>
            <person name="Haracska L."/>
            <person name="Prakash L."/>
            <person name="Prakash S."/>
        </authorList>
    </citation>
    <scope>FUNCTION</scope>
    <scope>SCHIFF BASE FORMATION</scope>
</reference>
<reference key="19">
    <citation type="journal article" date="2004" name="J. Mol. Biol.">
        <title>Translesion synthesis past 2'-deoxyxanthosine, a nitric oxide-derived DNA adduct, by mammalian DNA polymerases.</title>
        <authorList>
            <person name="Yasui M."/>
            <person name="Suzuki N."/>
            <person name="Miller H."/>
            <person name="Matsuda T."/>
            <person name="Matsui S."/>
            <person name="Shibutani S."/>
        </authorList>
    </citation>
    <scope>FUNCTION</scope>
</reference>
<reference key="20">
    <citation type="journal article" date="2017" name="Nature">
        <title>RNA m(6)A methylation regulates the ultraviolet-induced DNA damage response.</title>
        <authorList>
            <person name="Xiang Y."/>
            <person name="Laurent B."/>
            <person name="Hsu C.H."/>
            <person name="Nachtergaele S."/>
            <person name="Lu Z."/>
            <person name="Sheng W."/>
            <person name="Xu C."/>
            <person name="Chen H."/>
            <person name="Ouyang J."/>
            <person name="Wang S."/>
            <person name="Ling D."/>
            <person name="Hsu P.H."/>
            <person name="Zou L."/>
            <person name="Jambhekar A."/>
            <person name="He C."/>
            <person name="Shi Y."/>
        </authorList>
    </citation>
    <scope>FUNCTION</scope>
    <scope>SUBCELLULAR LOCATION</scope>
</reference>
<reference key="21">
    <citation type="journal article" date="2017" name="Nature">
        <authorList>
            <person name="Xiang Y."/>
            <person name="Laurent B."/>
            <person name="Hsu C.H."/>
            <person name="Nachtergaele S."/>
            <person name="Lu Z."/>
            <person name="Sheng W."/>
            <person name="Xu C."/>
            <person name="Chen H."/>
            <person name="Ouyang J."/>
            <person name="Wang S."/>
            <person name="Ling D."/>
            <person name="Hsu P.H."/>
            <person name="Zou L."/>
            <person name="Jambhekar A."/>
            <person name="He C."/>
            <person name="Shi Y."/>
        </authorList>
    </citation>
    <scope>ERRATUM OF PUBMED:28297716</scope>
</reference>
<reference key="22">
    <citation type="journal article" date="2004" name="Structure">
        <title>Crystal structure of the catalytic core of human DNA polymerase kappa.</title>
        <authorList>
            <person name="Uljon S.N."/>
            <person name="Johnson R.E."/>
            <person name="Edwards T.A."/>
            <person name="Prakash S."/>
            <person name="Prakash L."/>
            <person name="Aggarwal A.K."/>
        </authorList>
    </citation>
    <scope>X-RAY CRYSTALLOGRAPHY (2.4 ANGSTROMS) OF 68-526</scope>
</reference>
<proteinExistence type="evidence at protein level"/>
<protein>
    <recommendedName>
        <fullName>DNA polymerase kappa</fullName>
        <ecNumber evidence="7">2.7.7.7</ecNumber>
    </recommendedName>
    <alternativeName>
        <fullName>DINB protein</fullName>
        <shortName>DINP</shortName>
    </alternativeName>
</protein>
<dbReference type="EC" id="2.7.7.7" evidence="7"/>
<dbReference type="EMBL" id="AB027564">
    <property type="protein sequence ID" value="BAA86943.1"/>
    <property type="molecule type" value="mRNA"/>
</dbReference>
<dbReference type="EMBL" id="AF163570">
    <property type="protein sequence ID" value="AAF02540.1"/>
    <property type="molecule type" value="mRNA"/>
</dbReference>
<dbReference type="EMBL" id="AY769929">
    <property type="protein sequence ID" value="AAV80827.1"/>
    <property type="molecule type" value="mRNA"/>
</dbReference>
<dbReference type="EMBL" id="AY769931">
    <property type="protein sequence ID" value="AAV80829.1"/>
    <property type="molecule type" value="mRNA"/>
</dbReference>
<dbReference type="EMBL" id="AY769930">
    <property type="protein sequence ID" value="AAV80828.1"/>
    <property type="molecule type" value="mRNA"/>
</dbReference>
<dbReference type="EMBL" id="AY769932">
    <property type="protein sequence ID" value="AAV80830.1"/>
    <property type="molecule type" value="mRNA"/>
</dbReference>
<dbReference type="EMBL" id="AF194973">
    <property type="protein sequence ID" value="AAF23270.1"/>
    <property type="molecule type" value="mRNA"/>
</dbReference>
<dbReference type="EMBL" id="AF315602">
    <property type="protein sequence ID" value="AAN15780.1"/>
    <property type="molecule type" value="mRNA"/>
</dbReference>
<dbReference type="EMBL" id="AF318313">
    <property type="protein sequence ID" value="AAN15781.1"/>
    <property type="molecule type" value="mRNA"/>
</dbReference>
<dbReference type="EMBL" id="AK091659">
    <property type="protein sequence ID" value="BAC03714.1"/>
    <property type="molecule type" value="mRNA"/>
</dbReference>
<dbReference type="EMBL" id="AK314610">
    <property type="protein sequence ID" value="BAG37179.1"/>
    <property type="molecule type" value="mRNA"/>
</dbReference>
<dbReference type="EMBL" id="AY273797">
    <property type="protein sequence ID" value="AAP12648.1"/>
    <property type="molecule type" value="Genomic_DNA"/>
</dbReference>
<dbReference type="EMBL" id="AC010245">
    <property type="status" value="NOT_ANNOTATED_CDS"/>
    <property type="molecule type" value="Genomic_DNA"/>
</dbReference>
<dbReference type="EMBL" id="AC026424">
    <property type="status" value="NOT_ANNOTATED_CDS"/>
    <property type="molecule type" value="Genomic_DNA"/>
</dbReference>
<dbReference type="EMBL" id="AC116341">
    <property type="status" value="NOT_ANNOTATED_CDS"/>
    <property type="molecule type" value="Genomic_DNA"/>
</dbReference>
<dbReference type="EMBL" id="CH471084">
    <property type="protein sequence ID" value="EAW95763.1"/>
    <property type="molecule type" value="Genomic_DNA"/>
</dbReference>
<dbReference type="EMBL" id="BC014955">
    <property type="protein sequence ID" value="AAH14955.1"/>
    <property type="molecule type" value="mRNA"/>
</dbReference>
<dbReference type="EMBL" id="BC050718">
    <property type="protein sequence ID" value="AAH50718.1"/>
    <property type="molecule type" value="mRNA"/>
</dbReference>
<dbReference type="EMBL" id="AB036934">
    <property type="protein sequence ID" value="BAB58975.1"/>
    <property type="molecule type" value="Genomic_DNA"/>
</dbReference>
<dbReference type="EMBL" id="AB036935">
    <property type="protein sequence ID" value="BAB58976.1"/>
    <property type="molecule type" value="Genomic_DNA"/>
</dbReference>
<dbReference type="CCDS" id="CCDS4030.1">
    <molecule id="Q9UBT6-1"/>
</dbReference>
<dbReference type="RefSeq" id="NP_001332851.1">
    <molecule id="Q9UBT6-8"/>
    <property type="nucleotide sequence ID" value="NM_001345922.3"/>
</dbReference>
<dbReference type="RefSeq" id="NP_001374042.1">
    <molecule id="Q9UBT6-1"/>
    <property type="nucleotide sequence ID" value="NM_001387113.3"/>
</dbReference>
<dbReference type="RefSeq" id="NP_001382822.1">
    <molecule id="Q9UBT6-8"/>
    <property type="nucleotide sequence ID" value="NM_001395893.1"/>
</dbReference>
<dbReference type="RefSeq" id="NP_001382831.1">
    <molecule id="Q9UBT6-8"/>
    <property type="nucleotide sequence ID" value="NM_001395902.1"/>
</dbReference>
<dbReference type="RefSeq" id="NP_057302.1">
    <molecule id="Q9UBT6-1"/>
    <property type="nucleotide sequence ID" value="NM_016218.6"/>
</dbReference>
<dbReference type="RefSeq" id="XP_016865048.1">
    <property type="nucleotide sequence ID" value="XM_017009559.1"/>
</dbReference>
<dbReference type="RefSeq" id="XP_016865049.1">
    <property type="nucleotide sequence ID" value="XM_017009560.1"/>
</dbReference>
<dbReference type="RefSeq" id="XP_016865052.1">
    <property type="nucleotide sequence ID" value="XM_017009563.1"/>
</dbReference>
<dbReference type="RefSeq" id="XP_054184391.1">
    <molecule id="Q9UBT6-1"/>
    <property type="nucleotide sequence ID" value="XM_054328416.1"/>
</dbReference>
<dbReference type="RefSeq" id="XP_054184392.1">
    <molecule id="Q9UBT6-1"/>
    <property type="nucleotide sequence ID" value="XM_054328417.1"/>
</dbReference>
<dbReference type="PDB" id="1T94">
    <property type="method" value="X-ray"/>
    <property type="resolution" value="2.40 A"/>
    <property type="chains" value="A/B=68-526"/>
</dbReference>
<dbReference type="PDB" id="2LSI">
    <property type="method" value="NMR"/>
    <property type="chains" value="B=562-577"/>
</dbReference>
<dbReference type="PDB" id="2OH2">
    <property type="method" value="X-ray"/>
    <property type="resolution" value="3.05 A"/>
    <property type="chains" value="A/B=19-526"/>
</dbReference>
<dbReference type="PDB" id="2W7O">
    <property type="method" value="X-ray"/>
    <property type="resolution" value="3.16 A"/>
    <property type="chains" value="A/B=19-526"/>
</dbReference>
<dbReference type="PDB" id="2W7P">
    <property type="method" value="X-ray"/>
    <property type="resolution" value="3.71 A"/>
    <property type="chains" value="A/B=19-526"/>
</dbReference>
<dbReference type="PDB" id="3IN5">
    <property type="method" value="X-ray"/>
    <property type="resolution" value="3.20 A"/>
    <property type="chains" value="A/B=19-526"/>
</dbReference>
<dbReference type="PDB" id="3PZP">
    <property type="method" value="X-ray"/>
    <property type="resolution" value="3.34 A"/>
    <property type="chains" value="A/B=19-528"/>
</dbReference>
<dbReference type="PDB" id="4BA9">
    <property type="method" value="X-ray"/>
    <property type="resolution" value="2.73 A"/>
    <property type="chains" value="A/B/C/D/E/F=563-575"/>
</dbReference>
<dbReference type="PDB" id="4GK5">
    <property type="method" value="X-ray"/>
    <property type="resolution" value="3.21 A"/>
    <property type="chains" value="G=564-573"/>
</dbReference>
<dbReference type="PDB" id="4U6P">
    <property type="method" value="X-ray"/>
    <property type="resolution" value="2.59 A"/>
    <property type="chains" value="A/B=1-526"/>
</dbReference>
<dbReference type="PDB" id="4U7C">
    <property type="method" value="X-ray"/>
    <property type="resolution" value="2.80 A"/>
    <property type="chains" value="A/B=27-518"/>
</dbReference>
<dbReference type="PDB" id="5T14">
    <property type="method" value="X-ray"/>
    <property type="resolution" value="3.00 A"/>
    <property type="chains" value="A/B=1-527"/>
</dbReference>
<dbReference type="PDB" id="5W2A">
    <property type="method" value="X-ray"/>
    <property type="resolution" value="2.90 A"/>
    <property type="chains" value="A/B=1-526"/>
</dbReference>
<dbReference type="PDB" id="5W2C">
    <property type="method" value="X-ray"/>
    <property type="resolution" value="2.50 A"/>
    <property type="chains" value="A/B=1-526"/>
</dbReference>
<dbReference type="PDB" id="6BRX">
    <property type="method" value="X-ray"/>
    <property type="resolution" value="2.80 A"/>
    <property type="chains" value="A/B=1-526"/>
</dbReference>
<dbReference type="PDB" id="6BS1">
    <property type="method" value="X-ray"/>
    <property type="resolution" value="3.15 A"/>
    <property type="chains" value="A/B=1-526"/>
</dbReference>
<dbReference type="PDB" id="6CST">
    <property type="method" value="X-ray"/>
    <property type="resolution" value="2.00 A"/>
    <property type="chains" value="A/B=1-526"/>
</dbReference>
<dbReference type="PDB" id="7NV0">
    <property type="method" value="EM"/>
    <property type="resolution" value="3.40 A"/>
    <property type="chains" value="A=1-870"/>
</dbReference>
<dbReference type="PDB" id="7NV1">
    <property type="method" value="EM"/>
    <property type="resolution" value="6.40 A"/>
    <property type="chains" value="A=1-870"/>
</dbReference>
<dbReference type="PDBsum" id="1T94"/>
<dbReference type="PDBsum" id="2LSI"/>
<dbReference type="PDBsum" id="2OH2"/>
<dbReference type="PDBsum" id="2W7O"/>
<dbReference type="PDBsum" id="2W7P"/>
<dbReference type="PDBsum" id="3IN5"/>
<dbReference type="PDBsum" id="3PZP"/>
<dbReference type="PDBsum" id="4BA9"/>
<dbReference type="PDBsum" id="4GK5"/>
<dbReference type="PDBsum" id="4U6P"/>
<dbReference type="PDBsum" id="4U7C"/>
<dbReference type="PDBsum" id="5T14"/>
<dbReference type="PDBsum" id="5W2A"/>
<dbReference type="PDBsum" id="5W2C"/>
<dbReference type="PDBsum" id="6BRX"/>
<dbReference type="PDBsum" id="6BS1"/>
<dbReference type="PDBsum" id="6CST"/>
<dbReference type="PDBsum" id="7NV0"/>
<dbReference type="PDBsum" id="7NV1"/>
<dbReference type="EMDB" id="EMD-12601"/>
<dbReference type="EMDB" id="EMD-12602"/>
<dbReference type="SMR" id="Q9UBT6"/>
<dbReference type="BioGRID" id="119532">
    <property type="interactions" value="59"/>
</dbReference>
<dbReference type="CORUM" id="Q9UBT6"/>
<dbReference type="FunCoup" id="Q9UBT6">
    <property type="interactions" value="3041"/>
</dbReference>
<dbReference type="IntAct" id="Q9UBT6">
    <property type="interactions" value="36"/>
</dbReference>
<dbReference type="STRING" id="9606.ENSP00000241436"/>
<dbReference type="BindingDB" id="Q9UBT6"/>
<dbReference type="ChEMBL" id="CHEMBL5365"/>
<dbReference type="DrugBank" id="DB07435">
    <property type="generic name" value="1,2,3-TRIHYDROXY-1,2,3,4-TETRAHYDROBENZO[A]PYRENE"/>
</dbReference>
<dbReference type="DrugBank" id="DB07652">
    <property type="generic name" value="1-[2-DEOXYRIBOFURANOSYL]-2,4-DIFLUORO-5-METHYL-BENZENE-5'MONOPHOSPHATE"/>
</dbReference>
<dbReference type="DrugBank" id="DB08237">
    <property type="generic name" value="2'-deoxy-N-(naphthalen-1-ylmethyl)guanosine 5'-(dihydrogen phosphate)"/>
</dbReference>
<dbReference type="DrugCentral" id="Q9UBT6"/>
<dbReference type="GlyGen" id="Q9UBT6">
    <property type="glycosylation" value="2 sites, 1 O-linked glycan (1 site)"/>
</dbReference>
<dbReference type="iPTMnet" id="Q9UBT6"/>
<dbReference type="PhosphoSitePlus" id="Q9UBT6"/>
<dbReference type="BioMuta" id="POLK"/>
<dbReference type="DMDM" id="59798438"/>
<dbReference type="jPOST" id="Q9UBT6"/>
<dbReference type="MassIVE" id="Q9UBT6"/>
<dbReference type="PaxDb" id="9606-ENSP00000241436"/>
<dbReference type="PeptideAtlas" id="Q9UBT6"/>
<dbReference type="ProteomicsDB" id="63605"/>
<dbReference type="ProteomicsDB" id="63606"/>
<dbReference type="ProteomicsDB" id="63607"/>
<dbReference type="ProteomicsDB" id="84057">
    <molecule id="Q9UBT6-1"/>
</dbReference>
<dbReference type="ProteomicsDB" id="84058">
    <molecule id="Q9UBT6-2"/>
</dbReference>
<dbReference type="ProteomicsDB" id="84059">
    <molecule id="Q9UBT6-3"/>
</dbReference>
<dbReference type="ProteomicsDB" id="84060">
    <molecule id="Q9UBT6-4"/>
</dbReference>
<dbReference type="Pumba" id="Q9UBT6"/>
<dbReference type="Antibodypedia" id="12396">
    <property type="antibodies" value="339 antibodies from 31 providers"/>
</dbReference>
<dbReference type="DNASU" id="51426"/>
<dbReference type="Ensembl" id="ENST00000241436.9">
    <molecule id="Q9UBT6-1"/>
    <property type="protein sequence ID" value="ENSP00000241436.4"/>
    <property type="gene ID" value="ENSG00000122008.16"/>
</dbReference>
<dbReference type="Ensembl" id="ENST00000504026.5">
    <molecule id="Q9UBT6-6"/>
    <property type="protein sequence ID" value="ENSP00000425075.1"/>
    <property type="gene ID" value="ENSG00000122008.16"/>
</dbReference>
<dbReference type="Ensembl" id="ENST00000508526.5">
    <molecule id="Q9UBT6-3"/>
    <property type="protein sequence ID" value="ENSP00000426853.1"/>
    <property type="gene ID" value="ENSG00000122008.16"/>
</dbReference>
<dbReference type="Ensembl" id="ENST00000509126.2">
    <molecule id="Q9UBT6-5"/>
    <property type="protein sequence ID" value="ENSP00000423532.1"/>
    <property type="gene ID" value="ENSG00000122008.16"/>
</dbReference>
<dbReference type="Ensembl" id="ENST00000510815.6">
    <molecule id="Q9UBT6-4"/>
    <property type="protein sequence ID" value="ENSP00000422094.2"/>
    <property type="gene ID" value="ENSG00000122008.16"/>
</dbReference>
<dbReference type="Ensembl" id="ENST00000515295.5">
    <molecule id="Q9UBT6-2"/>
    <property type="protein sequence ID" value="ENSP00000424174.1"/>
    <property type="gene ID" value="ENSG00000122008.16"/>
</dbReference>
<dbReference type="GeneID" id="51426"/>
<dbReference type="KEGG" id="hsa:51426"/>
<dbReference type="MANE-Select" id="ENST00000241436.9">
    <property type="protein sequence ID" value="ENSP00000241436.4"/>
    <property type="RefSeq nucleotide sequence ID" value="NM_016218.6"/>
    <property type="RefSeq protein sequence ID" value="NP_057302.1"/>
</dbReference>
<dbReference type="UCSC" id="uc003kdw.4">
    <molecule id="Q9UBT6-1"/>
    <property type="organism name" value="human"/>
</dbReference>
<dbReference type="AGR" id="HGNC:9183"/>
<dbReference type="CTD" id="51426"/>
<dbReference type="DisGeNET" id="51426"/>
<dbReference type="GeneCards" id="POLK"/>
<dbReference type="HGNC" id="HGNC:9183">
    <property type="gene designation" value="POLK"/>
</dbReference>
<dbReference type="HPA" id="ENSG00000122008">
    <property type="expression patterns" value="Low tissue specificity"/>
</dbReference>
<dbReference type="MalaCards" id="POLK"/>
<dbReference type="MIM" id="605650">
    <property type="type" value="gene"/>
</dbReference>
<dbReference type="neXtProt" id="NX_Q9UBT6"/>
<dbReference type="OpenTargets" id="ENSG00000122008"/>
<dbReference type="PharmGKB" id="PA33503"/>
<dbReference type="VEuPathDB" id="HostDB:ENSG00000122008"/>
<dbReference type="eggNOG" id="KOG2094">
    <property type="taxonomic scope" value="Eukaryota"/>
</dbReference>
<dbReference type="GeneTree" id="ENSGT00940000156667"/>
<dbReference type="HOGENOM" id="CLU_012348_11_3_1"/>
<dbReference type="InParanoid" id="Q9UBT6"/>
<dbReference type="OMA" id="SWHNFLD"/>
<dbReference type="OrthoDB" id="1747274at2759"/>
<dbReference type="PAN-GO" id="Q9UBT6">
    <property type="GO annotations" value="3 GO annotations based on evolutionary models"/>
</dbReference>
<dbReference type="PhylomeDB" id="Q9UBT6"/>
<dbReference type="TreeFam" id="TF314387"/>
<dbReference type="BRENDA" id="2.7.7.7">
    <property type="organism ID" value="2681"/>
</dbReference>
<dbReference type="PathwayCommons" id="Q9UBT6"/>
<dbReference type="Reactome" id="R-HSA-5655862">
    <property type="pathway name" value="Translesion synthesis by POLK"/>
</dbReference>
<dbReference type="Reactome" id="R-HSA-5656169">
    <property type="pathway name" value="Termination of translesion DNA synthesis"/>
</dbReference>
<dbReference type="Reactome" id="R-HSA-5685942">
    <property type="pathway name" value="HDR through Homologous Recombination (HRR)"/>
</dbReference>
<dbReference type="Reactome" id="R-HSA-5696397">
    <property type="pathway name" value="Gap-filling DNA repair synthesis and ligation in GG-NER"/>
</dbReference>
<dbReference type="Reactome" id="R-HSA-5696400">
    <property type="pathway name" value="Dual Incision in GG-NER"/>
</dbReference>
<dbReference type="Reactome" id="R-HSA-6782135">
    <property type="pathway name" value="Dual incision in TC-NER"/>
</dbReference>
<dbReference type="Reactome" id="R-HSA-6782210">
    <property type="pathway name" value="Gap-filling DNA repair synthesis and ligation in TC-NER"/>
</dbReference>
<dbReference type="SignaLink" id="Q9UBT6"/>
<dbReference type="BioGRID-ORCS" id="51426">
    <property type="hits" value="21 hits in 1160 CRISPR screens"/>
</dbReference>
<dbReference type="ChiTaRS" id="POLK">
    <property type="organism name" value="human"/>
</dbReference>
<dbReference type="EvolutionaryTrace" id="Q9UBT6"/>
<dbReference type="GeneWiki" id="POLK"/>
<dbReference type="GenomeRNAi" id="51426"/>
<dbReference type="Pharos" id="Q9UBT6">
    <property type="development level" value="Tbio"/>
</dbReference>
<dbReference type="PRO" id="PR:Q9UBT6"/>
<dbReference type="Proteomes" id="UP000005640">
    <property type="component" value="Chromosome 5"/>
</dbReference>
<dbReference type="RNAct" id="Q9UBT6">
    <property type="molecule type" value="protein"/>
</dbReference>
<dbReference type="Bgee" id="ENSG00000122008">
    <property type="expression patterns" value="Expressed in calcaneal tendon and 187 other cell types or tissues"/>
</dbReference>
<dbReference type="ExpressionAtlas" id="Q9UBT6">
    <property type="expression patterns" value="baseline and differential"/>
</dbReference>
<dbReference type="GO" id="GO:0016604">
    <property type="term" value="C:nuclear body"/>
    <property type="evidence" value="ECO:0000314"/>
    <property type="project" value="HPA"/>
</dbReference>
<dbReference type="GO" id="GO:0005654">
    <property type="term" value="C:nucleoplasm"/>
    <property type="evidence" value="ECO:0000314"/>
    <property type="project" value="HPA"/>
</dbReference>
<dbReference type="GO" id="GO:0005634">
    <property type="term" value="C:nucleus"/>
    <property type="evidence" value="ECO:0000314"/>
    <property type="project" value="UniProtKB"/>
</dbReference>
<dbReference type="GO" id="GO:0003684">
    <property type="term" value="F:damaged DNA binding"/>
    <property type="evidence" value="ECO:0007669"/>
    <property type="project" value="InterPro"/>
</dbReference>
<dbReference type="GO" id="GO:0003887">
    <property type="term" value="F:DNA-directed DNA polymerase activity"/>
    <property type="evidence" value="ECO:0000318"/>
    <property type="project" value="GO_Central"/>
</dbReference>
<dbReference type="GO" id="GO:0008270">
    <property type="term" value="F:zinc ion binding"/>
    <property type="evidence" value="ECO:0007669"/>
    <property type="project" value="UniProtKB-KW"/>
</dbReference>
<dbReference type="GO" id="GO:0034644">
    <property type="term" value="P:cellular response to UV"/>
    <property type="evidence" value="ECO:0000314"/>
    <property type="project" value="UniProtKB"/>
</dbReference>
<dbReference type="GO" id="GO:0006974">
    <property type="term" value="P:DNA damage response"/>
    <property type="evidence" value="ECO:0000314"/>
    <property type="project" value="UniProtKB"/>
</dbReference>
<dbReference type="GO" id="GO:0006281">
    <property type="term" value="P:DNA repair"/>
    <property type="evidence" value="ECO:0000314"/>
    <property type="project" value="UniProtKB"/>
</dbReference>
<dbReference type="GO" id="GO:0006260">
    <property type="term" value="P:DNA replication"/>
    <property type="evidence" value="ECO:0007669"/>
    <property type="project" value="UniProtKB-KW"/>
</dbReference>
<dbReference type="GO" id="GO:0042276">
    <property type="term" value="P:error-prone translesion synthesis"/>
    <property type="evidence" value="ECO:0000314"/>
    <property type="project" value="UniProtKB"/>
</dbReference>
<dbReference type="GO" id="GO:0006297">
    <property type="term" value="P:nucleotide-excision repair, DNA gap filling"/>
    <property type="evidence" value="ECO:0000315"/>
    <property type="project" value="UniProtKB"/>
</dbReference>
<dbReference type="CDD" id="cd03586">
    <property type="entry name" value="PolY_Pol_IV_kappa"/>
    <property type="match status" value="1"/>
</dbReference>
<dbReference type="FunFam" id="1.10.150.810:FF:000001">
    <property type="entry name" value="DNA polymerase kappa"/>
    <property type="match status" value="1"/>
</dbReference>
<dbReference type="FunFam" id="3.30.1490.100:FF:000005">
    <property type="entry name" value="DNA polymerase kappa"/>
    <property type="match status" value="1"/>
</dbReference>
<dbReference type="FunFam" id="3.30.160.60:FF:000956">
    <property type="entry name" value="DNA polymerase kappa"/>
    <property type="match status" value="1"/>
</dbReference>
<dbReference type="FunFam" id="1.10.150.20:FF:000039">
    <property type="entry name" value="Polymerase (DNA directed) kappa"/>
    <property type="match status" value="1"/>
</dbReference>
<dbReference type="FunFam" id="1.10.150.810:FF:000002">
    <property type="entry name" value="Polymerase (DNA directed) kappa"/>
    <property type="match status" value="1"/>
</dbReference>
<dbReference type="FunFam" id="3.30.160.60:FF:000807">
    <property type="entry name" value="Polymerase (DNA directed) kappa"/>
    <property type="match status" value="1"/>
</dbReference>
<dbReference type="FunFam" id="3.30.70.270:FF:000151">
    <property type="entry name" value="Polymerase (DNA directed) kappa"/>
    <property type="match status" value="1"/>
</dbReference>
<dbReference type="FunFam" id="3.40.1170.60:FF:000002">
    <property type="entry name" value="Polymerase (DNA directed) kappa"/>
    <property type="match status" value="1"/>
</dbReference>
<dbReference type="Gene3D" id="1.10.150.810">
    <property type="match status" value="2"/>
</dbReference>
<dbReference type="Gene3D" id="3.30.70.270">
    <property type="match status" value="1"/>
</dbReference>
<dbReference type="Gene3D" id="3.40.1170.60">
    <property type="match status" value="1"/>
</dbReference>
<dbReference type="Gene3D" id="3.30.160.60">
    <property type="entry name" value="Classic Zinc Finger"/>
    <property type="match status" value="2"/>
</dbReference>
<dbReference type="Gene3D" id="3.30.1490.100">
    <property type="entry name" value="DNA polymerase, Y-family, little finger domain"/>
    <property type="match status" value="1"/>
</dbReference>
<dbReference type="HAMAP" id="MF_01113">
    <property type="entry name" value="DNApol_IV"/>
    <property type="match status" value="1"/>
</dbReference>
<dbReference type="IDEAL" id="IID00105"/>
<dbReference type="InterPro" id="IPR043502">
    <property type="entry name" value="DNA/RNA_pol_sf"/>
</dbReference>
<dbReference type="InterPro" id="IPR036775">
    <property type="entry name" value="DNA_pol_Y-fam_lit_finger_sf"/>
</dbReference>
<dbReference type="InterPro" id="IPR017961">
    <property type="entry name" value="DNA_pol_Y-fam_little_finger"/>
</dbReference>
<dbReference type="InterPro" id="IPR050116">
    <property type="entry name" value="DNA_polymerase-Y"/>
</dbReference>
<dbReference type="InterPro" id="IPR022880">
    <property type="entry name" value="DNApol_IV"/>
</dbReference>
<dbReference type="InterPro" id="IPR024728">
    <property type="entry name" value="PolY_HhH_motif"/>
</dbReference>
<dbReference type="InterPro" id="IPR006642">
    <property type="entry name" value="Rad18_UBZ4"/>
</dbReference>
<dbReference type="InterPro" id="IPR043128">
    <property type="entry name" value="Rev_trsase/Diguanyl_cyclase"/>
</dbReference>
<dbReference type="InterPro" id="IPR001126">
    <property type="entry name" value="UmuC"/>
</dbReference>
<dbReference type="PANTHER" id="PTHR11076:SF33">
    <property type="entry name" value="DNA POLYMERASE KAPPA"/>
    <property type="match status" value="1"/>
</dbReference>
<dbReference type="PANTHER" id="PTHR11076">
    <property type="entry name" value="DNA REPAIR POLYMERASE UMUC / TRANSFERASE FAMILY MEMBER"/>
    <property type="match status" value="1"/>
</dbReference>
<dbReference type="Pfam" id="PF00817">
    <property type="entry name" value="IMS"/>
    <property type="match status" value="1"/>
</dbReference>
<dbReference type="Pfam" id="PF11799">
    <property type="entry name" value="IMS_C"/>
    <property type="match status" value="1"/>
</dbReference>
<dbReference type="Pfam" id="PF11798">
    <property type="entry name" value="IMS_HHH"/>
    <property type="match status" value="1"/>
</dbReference>
<dbReference type="PIRSF" id="PIRSF036603">
    <property type="entry name" value="DPol_eta"/>
    <property type="match status" value="1"/>
</dbReference>
<dbReference type="SMART" id="SM00734">
    <property type="entry name" value="ZnF_Rad18"/>
    <property type="match status" value="2"/>
</dbReference>
<dbReference type="SUPFAM" id="SSF56672">
    <property type="entry name" value="DNA/RNA polymerases"/>
    <property type="match status" value="1"/>
</dbReference>
<dbReference type="SUPFAM" id="SSF100879">
    <property type="entry name" value="Lesion bypass DNA polymerase (Y-family), little finger domain"/>
    <property type="match status" value="1"/>
</dbReference>
<dbReference type="PROSITE" id="PS50173">
    <property type="entry name" value="UMUC"/>
    <property type="match status" value="1"/>
</dbReference>
<dbReference type="PROSITE" id="PS51908">
    <property type="entry name" value="ZF_UBZ4"/>
    <property type="match status" value="2"/>
</dbReference>